<protein>
    <recommendedName>
        <fullName evidence="9">T cell receptor beta variable 25-1</fullName>
    </recommendedName>
</protein>
<sequence length="114" mass="12983">MTIRLLCYVGFYFLGAGLMEADIYQTPRYLVIGTGKKITLECSQTMGHDKMYWYQQDPGMELHLIHYSYGVNSTEKGDLSSESTVSRIRTEHFPLTLESARPSHTSQYLCASSE</sequence>
<keyword id="KW-1064">Adaptive immunity</keyword>
<keyword id="KW-1003">Cell membrane</keyword>
<keyword id="KW-1015">Disulfide bond</keyword>
<keyword id="KW-0325">Glycoprotein</keyword>
<keyword id="KW-0391">Immunity</keyword>
<keyword id="KW-0393">Immunoglobulin domain</keyword>
<keyword id="KW-0472">Membrane</keyword>
<keyword id="KW-0675">Receptor</keyword>
<keyword id="KW-1185">Reference proteome</keyword>
<keyword id="KW-0732">Signal</keyword>
<keyword id="KW-1279">T cell receptor</keyword>
<proteinExistence type="inferred from homology"/>
<gene>
    <name evidence="9" type="primary">TRBV25-1</name>
</gene>
<accession>A0A075B6N4</accession>
<dbReference type="EMBL" id="AC244472">
    <property type="status" value="NOT_ANNOTATED_CDS"/>
    <property type="molecule type" value="Genomic_DNA"/>
</dbReference>
<dbReference type="SMR" id="A0A075B6N4"/>
<dbReference type="FunCoup" id="A0A075B6N4">
    <property type="interactions" value="380"/>
</dbReference>
<dbReference type="IMGT_GENE-DB" id="TRBV25-1"/>
<dbReference type="GlyCosmos" id="A0A075B6N4">
    <property type="glycosylation" value="1 site, No reported glycans"/>
</dbReference>
<dbReference type="GlyGen" id="A0A075B6N4">
    <property type="glycosylation" value="2 sites, 1 O-linked glycan (1 site)"/>
</dbReference>
<dbReference type="BioMuta" id="TRBV25-1"/>
<dbReference type="Ensembl" id="ENST00000390398.3">
    <property type="protein sequence ID" value="ENSP00000374921.3"/>
    <property type="gene ID" value="ENSG00000282499.1"/>
</dbReference>
<dbReference type="UCSC" id="uc003waa.3">
    <property type="organism name" value="human"/>
</dbReference>
<dbReference type="AGR" id="HGNC:12205"/>
<dbReference type="GeneCards" id="TRBV25-1"/>
<dbReference type="HGNC" id="HGNC:12205">
    <property type="gene designation" value="TRBV25-1"/>
</dbReference>
<dbReference type="HPA" id="ENSG00000282499">
    <property type="expression patterns" value="Tissue enriched (lymphoid)"/>
</dbReference>
<dbReference type="neXtProt" id="NX_A0A075B6N4"/>
<dbReference type="VEuPathDB" id="HostDB:ENSG00000282499"/>
<dbReference type="GeneTree" id="ENSGT00940000164297"/>
<dbReference type="HOGENOM" id="CLU_077975_9_2_1"/>
<dbReference type="InParanoid" id="A0A075B6N4"/>
<dbReference type="OMA" id="ENMYWYR"/>
<dbReference type="OrthoDB" id="9803478at2759"/>
<dbReference type="PAN-GO" id="A0A075B6N4">
    <property type="GO annotations" value="2 GO annotations based on evolutionary models"/>
</dbReference>
<dbReference type="PhylomeDB" id="A0A075B6N4"/>
<dbReference type="ChiTaRS" id="TRBV25-1">
    <property type="organism name" value="human"/>
</dbReference>
<dbReference type="Pharos" id="A0A075B6N4">
    <property type="development level" value="Tdark"/>
</dbReference>
<dbReference type="PRO" id="PR:A0A075B6N4"/>
<dbReference type="Proteomes" id="UP000005640">
    <property type="component" value="Chromosome 7"/>
</dbReference>
<dbReference type="RNAct" id="A0A075B6N4">
    <property type="molecule type" value="protein"/>
</dbReference>
<dbReference type="Bgee" id="ENSG00000282499">
    <property type="expression patterns" value="Expressed in lymph node and 84 other cell types or tissues"/>
</dbReference>
<dbReference type="GO" id="GO:0005886">
    <property type="term" value="C:plasma membrane"/>
    <property type="evidence" value="ECO:0000318"/>
    <property type="project" value="GO_Central"/>
</dbReference>
<dbReference type="GO" id="GO:0042101">
    <property type="term" value="C:T cell receptor complex"/>
    <property type="evidence" value="ECO:0007669"/>
    <property type="project" value="UniProtKB-KW"/>
</dbReference>
<dbReference type="GO" id="GO:0002250">
    <property type="term" value="P:adaptive immune response"/>
    <property type="evidence" value="ECO:0007669"/>
    <property type="project" value="UniProtKB-KW"/>
</dbReference>
<dbReference type="GO" id="GO:0007166">
    <property type="term" value="P:cell surface receptor signaling pathway"/>
    <property type="evidence" value="ECO:0000318"/>
    <property type="project" value="GO_Central"/>
</dbReference>
<dbReference type="Gene3D" id="2.60.40.10">
    <property type="entry name" value="Immunoglobulins"/>
    <property type="match status" value="1"/>
</dbReference>
<dbReference type="InterPro" id="IPR007110">
    <property type="entry name" value="Ig-like_dom"/>
</dbReference>
<dbReference type="InterPro" id="IPR036179">
    <property type="entry name" value="Ig-like_dom_sf"/>
</dbReference>
<dbReference type="InterPro" id="IPR013783">
    <property type="entry name" value="Ig-like_fold"/>
</dbReference>
<dbReference type="InterPro" id="IPR013106">
    <property type="entry name" value="Ig_V-set"/>
</dbReference>
<dbReference type="InterPro" id="IPR050413">
    <property type="entry name" value="TCR_beta_variable"/>
</dbReference>
<dbReference type="PANTHER" id="PTHR23268:SF30">
    <property type="entry name" value="T CELL RECEPTOR BETA CHAIN MC.7.G5-RELATED"/>
    <property type="match status" value="1"/>
</dbReference>
<dbReference type="PANTHER" id="PTHR23268">
    <property type="entry name" value="T-CELL RECEPTOR BETA CHAIN"/>
    <property type="match status" value="1"/>
</dbReference>
<dbReference type="Pfam" id="PF07686">
    <property type="entry name" value="V-set"/>
    <property type="match status" value="1"/>
</dbReference>
<dbReference type="SUPFAM" id="SSF48726">
    <property type="entry name" value="Immunoglobulin"/>
    <property type="match status" value="1"/>
</dbReference>
<dbReference type="PROSITE" id="PS50835">
    <property type="entry name" value="IG_LIKE"/>
    <property type="match status" value="1"/>
</dbReference>
<feature type="signal peptide" evidence="1">
    <location>
        <begin position="1"/>
        <end position="21"/>
    </location>
</feature>
<feature type="chain" id="PRO_5001705189" description="T cell receptor beta variable 25-1" evidence="1">
    <location>
        <begin position="22"/>
        <end position="114"/>
    </location>
</feature>
<feature type="domain" description="Ig-like" evidence="2">
    <location>
        <begin position="22"/>
        <end position="114" status="greater than"/>
    </location>
</feature>
<feature type="glycosylation site" description="N-linked (GlcNAc...) asparagine" evidence="3">
    <location>
        <position position="72"/>
    </location>
</feature>
<feature type="disulfide bond" evidence="2">
    <location>
        <begin position="42"/>
        <end position="110"/>
    </location>
</feature>
<feature type="non-terminal residue">
    <location>
        <position position="114"/>
    </location>
</feature>
<name>TVBY1_HUMAN</name>
<evidence type="ECO:0000255" key="1"/>
<evidence type="ECO:0000255" key="2">
    <source>
        <dbReference type="PROSITE-ProRule" id="PRU00114"/>
    </source>
</evidence>
<evidence type="ECO:0000255" key="3">
    <source>
        <dbReference type="PROSITE-ProRule" id="PRU00498"/>
    </source>
</evidence>
<evidence type="ECO:0000303" key="4">
    <source>
    </source>
</evidence>
<evidence type="ECO:0000303" key="5">
    <source>
    </source>
</evidence>
<evidence type="ECO:0000303" key="6">
    <source>
    </source>
</evidence>
<evidence type="ECO:0000303" key="7">
    <source>
    </source>
</evidence>
<evidence type="ECO:0000303" key="8">
    <source>
    </source>
</evidence>
<evidence type="ECO:0000303" key="9">
    <source ref="2"/>
</evidence>
<evidence type="ECO:0000305" key="10"/>
<comment type="function">
    <text evidence="4 6 7 8">V region of the variable domain of T cell receptor (TR) beta chain that participates in the antigen recognition (PubMed:24600447). Alpha-beta T cell receptors are antigen specific receptors which are essential to the immune response and are present on the cell surface of T lymphocytes. Recognize peptide-major histocompatibility (MH) (pMH) complexes that are displayed by antigen presenting cells (APC), a prerequisite for efficient T cell adaptive immunity against pathogens (PubMed:25493333). Binding of alpha-beta TR to pMH complex initiates TR-CD3 clustering on the cell surface and intracellular activation of LCK that phosphorylates the ITAM motifs of CD3G, CD3D, CD3E and CD247 enabling the recruitment of ZAP70. In turn ZAP70 phosphorylates LAT, which recruits numerous signaling molecules to form the LAT signalosome. The LAT signalosome propagates signal branching to three major signaling pathways, the calcium, the mitogen-activated protein kinase (MAPK) kinase and the nuclear factor NF-kappa-B (NF-kB) pathways, leading to the mobilization of transcription factors that are critical for gene expression and essential for T cell growth and differentiation (PubMed:23524462). The T cell repertoire is generated in the thymus, by V-(D)-J rearrangement. This repertoire is then shaped by intrathymic selection events to generate a peripheral T cell pool of self-MH restricted, non-autoaggressive T cells. Post-thymic interaction of alpha-beta TR with the pMH complexes shapes TR structural and functional avidity (PubMed:15040585).</text>
</comment>
<comment type="subunit">
    <text evidence="5">Alpha-beta TR is a heterodimer composed of an alpha and beta chain; disulfide-linked. The alpha-beta TR is associated with the transmembrane signaling CD3 coreceptor proteins to form the TR-CD3 (TcR or TCR). The assembly of alpha-beta TR heterodimers with CD3 occurs in the endoplasmic reticulum where a single alpha-beta TR heterodimer associates with one CD3D-CD3E heterodimer, one CD3G-CD3E heterodimer and one CD247 homodimer forming a stable octameric structure. CD3D-CD3E and CD3G-CD3E heterodimers preferentially associate with TR alpha and TR beta chains, respectively. The association of the CD247 homodimer is the last step of TcR assembly in the endoplasmic reticulum and is required for transport to the cell surface.</text>
</comment>
<comment type="subcellular location">
    <subcellularLocation>
        <location evidence="5">Cell membrane</location>
    </subcellularLocation>
</comment>
<comment type="polymorphism">
    <text evidence="10">There are several alleles. The sequence shown is that of IMGT allele TRBV25-1*01.</text>
</comment>
<reference key="1">
    <citation type="journal article" date="2003" name="Nature">
        <title>The DNA sequence of human chromosome 7.</title>
        <authorList>
            <person name="Hillier L.W."/>
            <person name="Fulton R.S."/>
            <person name="Fulton L.A."/>
            <person name="Graves T.A."/>
            <person name="Pepin K.H."/>
            <person name="Wagner-McPherson C."/>
            <person name="Layman D."/>
            <person name="Maas J."/>
            <person name="Jaeger S."/>
            <person name="Walker R."/>
            <person name="Wylie K."/>
            <person name="Sekhon M."/>
            <person name="Becker M.C."/>
            <person name="O'Laughlin M.D."/>
            <person name="Schaller M.E."/>
            <person name="Fewell G.A."/>
            <person name="Delehaunty K.D."/>
            <person name="Miner T.L."/>
            <person name="Nash W.E."/>
            <person name="Cordes M."/>
            <person name="Du H."/>
            <person name="Sun H."/>
            <person name="Edwards J."/>
            <person name="Bradshaw-Cordum H."/>
            <person name="Ali J."/>
            <person name="Andrews S."/>
            <person name="Isak A."/>
            <person name="Vanbrunt A."/>
            <person name="Nguyen C."/>
            <person name="Du F."/>
            <person name="Lamar B."/>
            <person name="Courtney L."/>
            <person name="Kalicki J."/>
            <person name="Ozersky P."/>
            <person name="Bielicki L."/>
            <person name="Scott K."/>
            <person name="Holmes A."/>
            <person name="Harkins R."/>
            <person name="Harris A."/>
            <person name="Strong C.M."/>
            <person name="Hou S."/>
            <person name="Tomlinson C."/>
            <person name="Dauphin-Kohlberg S."/>
            <person name="Kozlowicz-Reilly A."/>
            <person name="Leonard S."/>
            <person name="Rohlfing T."/>
            <person name="Rock S.M."/>
            <person name="Tin-Wollam A.-M."/>
            <person name="Abbott A."/>
            <person name="Minx P."/>
            <person name="Maupin R."/>
            <person name="Strowmatt C."/>
            <person name="Latreille P."/>
            <person name="Miller N."/>
            <person name="Johnson D."/>
            <person name="Murray J."/>
            <person name="Woessner J.P."/>
            <person name="Wendl M.C."/>
            <person name="Yang S.-P."/>
            <person name="Schultz B.R."/>
            <person name="Wallis J.W."/>
            <person name="Spieth J."/>
            <person name="Bieri T.A."/>
            <person name="Nelson J.O."/>
            <person name="Berkowicz N."/>
            <person name="Wohldmann P.E."/>
            <person name="Cook L.L."/>
            <person name="Hickenbotham M.T."/>
            <person name="Eldred J."/>
            <person name="Williams D."/>
            <person name="Bedell J.A."/>
            <person name="Mardis E.R."/>
            <person name="Clifton S.W."/>
            <person name="Chissoe S.L."/>
            <person name="Marra M.A."/>
            <person name="Raymond C."/>
            <person name="Haugen E."/>
            <person name="Gillett W."/>
            <person name="Zhou Y."/>
            <person name="James R."/>
            <person name="Phelps K."/>
            <person name="Iadanoto S."/>
            <person name="Bubb K."/>
            <person name="Simms E."/>
            <person name="Levy R."/>
            <person name="Clendenning J."/>
            <person name="Kaul R."/>
            <person name="Kent W.J."/>
            <person name="Furey T.S."/>
            <person name="Baertsch R.A."/>
            <person name="Brent M.R."/>
            <person name="Keibler E."/>
            <person name="Flicek P."/>
            <person name="Bork P."/>
            <person name="Suyama M."/>
            <person name="Bailey J.A."/>
            <person name="Portnoy M.E."/>
            <person name="Torrents D."/>
            <person name="Chinwalla A.T."/>
            <person name="Gish W.R."/>
            <person name="Eddy S.R."/>
            <person name="McPherson J.D."/>
            <person name="Olson M.V."/>
            <person name="Eichler E.E."/>
            <person name="Green E.D."/>
            <person name="Waterston R.H."/>
            <person name="Wilson R.K."/>
        </authorList>
    </citation>
    <scope>NUCLEOTIDE SEQUENCE [LARGE SCALE GENOMIC DNA] (IMGT ALLELE TRBV25-1*01)</scope>
</reference>
<reference key="2">
    <citation type="book" date="2001" name="The T Cell Receptor FactsBook.">
        <title>The T Cell Receptor FactsBook.</title>
        <editorList>
            <person name="Lefranc M.P."/>
            <person name="Lefranc G."/>
        </editorList>
        <authorList>
            <person name="Lefranc M.P."/>
            <person name="Lefranc G."/>
        </authorList>
    </citation>
    <scope>NOMENCLATURE</scope>
</reference>
<reference key="3">
    <citation type="journal article" date="2004" name="Nat. Rev. Immunol.">
        <title>The many important facets of T-cell repertoire diversity.</title>
        <authorList>
            <person name="Nikolich-Zugich J."/>
            <person name="Slifka M.K."/>
            <person name="Messaoudi I."/>
        </authorList>
    </citation>
    <scope>REVIEW ON T CELL REPERTOIRE DIVERSITY</scope>
</reference>
<reference key="4">
    <citation type="journal article" date="2010" name="Cold Spring Harb. Perspect. Biol.">
        <title>Structural biology of the T-cell receptor: insights into receptor assembly, ligand recognition, and initiation of signaling.</title>
        <authorList>
            <person name="Wucherpfennig K.W."/>
            <person name="Gagnon E."/>
            <person name="Call M.J."/>
            <person name="Huseby E.S."/>
            <person name="Call M.E."/>
        </authorList>
    </citation>
    <scope>REVIEW ON T CELL RECEPTOR-CD3 COMPLEX ASSEMBLY</scope>
    <scope>SUBCELLULAR LOCATION</scope>
</reference>
<reference key="5">
    <citation type="journal article" date="2013" name="Nat. Rev. Immunol.">
        <title>T cell receptor signalling networks: branched, diversified and bounded.</title>
        <authorList>
            <person name="Brownlie R.J."/>
            <person name="Zamoyska R."/>
        </authorList>
    </citation>
    <scope>REVIEW ON T CELL RECEPTOR SIGNALING</scope>
</reference>
<reference key="6">
    <citation type="journal article" date="2014" name="Front. Immunol.">
        <title>Immunoglobulin and T Cell Receptor Genes: IMGT((R)) and the Birth and Rise of Immunoinformatics.</title>
        <authorList>
            <person name="Lefranc M.P."/>
        </authorList>
    </citation>
    <scope>NOMENCLATURE</scope>
</reference>
<reference key="7">
    <citation type="journal article" date="2015" name="Annu. Rev. Immunol.">
        <title>T cell antigen receptor recognition of antigen-presenting molecules.</title>
        <authorList>
            <person name="Rossjohn J."/>
            <person name="Gras S."/>
            <person name="Miles J.J."/>
            <person name="Turner S.J."/>
            <person name="Godfrey D.I."/>
            <person name="McCluskey J."/>
        </authorList>
    </citation>
    <scope>REVIEW ON FUNCTION</scope>
</reference>
<organism>
    <name type="scientific">Homo sapiens</name>
    <name type="common">Human</name>
    <dbReference type="NCBI Taxonomy" id="9606"/>
    <lineage>
        <taxon>Eukaryota</taxon>
        <taxon>Metazoa</taxon>
        <taxon>Chordata</taxon>
        <taxon>Craniata</taxon>
        <taxon>Vertebrata</taxon>
        <taxon>Euteleostomi</taxon>
        <taxon>Mammalia</taxon>
        <taxon>Eutheria</taxon>
        <taxon>Euarchontoglires</taxon>
        <taxon>Primates</taxon>
        <taxon>Haplorrhini</taxon>
        <taxon>Catarrhini</taxon>
        <taxon>Hominidae</taxon>
        <taxon>Homo</taxon>
    </lineage>
</organism>